<gene>
    <name evidence="1" type="primary">obg</name>
    <name type="ordered locus">Nther_0532</name>
</gene>
<accession>B2A6B7</accession>
<dbReference type="EC" id="3.6.5.-" evidence="1"/>
<dbReference type="EMBL" id="CP001034">
    <property type="protein sequence ID" value="ACB84128.1"/>
    <property type="molecule type" value="Genomic_DNA"/>
</dbReference>
<dbReference type="RefSeq" id="WP_012447014.1">
    <property type="nucleotide sequence ID" value="NC_010718.1"/>
</dbReference>
<dbReference type="SMR" id="B2A6B7"/>
<dbReference type="FunCoup" id="B2A6B7">
    <property type="interactions" value="367"/>
</dbReference>
<dbReference type="STRING" id="457570.Nther_0532"/>
<dbReference type="KEGG" id="nth:Nther_0532"/>
<dbReference type="eggNOG" id="COG0536">
    <property type="taxonomic scope" value="Bacteria"/>
</dbReference>
<dbReference type="HOGENOM" id="CLU_011747_2_1_9"/>
<dbReference type="InParanoid" id="B2A6B7"/>
<dbReference type="OrthoDB" id="9807318at2"/>
<dbReference type="Proteomes" id="UP000001683">
    <property type="component" value="Chromosome"/>
</dbReference>
<dbReference type="GO" id="GO:0005737">
    <property type="term" value="C:cytoplasm"/>
    <property type="evidence" value="ECO:0007669"/>
    <property type="project" value="UniProtKB-SubCell"/>
</dbReference>
<dbReference type="GO" id="GO:0005525">
    <property type="term" value="F:GTP binding"/>
    <property type="evidence" value="ECO:0007669"/>
    <property type="project" value="UniProtKB-UniRule"/>
</dbReference>
<dbReference type="GO" id="GO:0003924">
    <property type="term" value="F:GTPase activity"/>
    <property type="evidence" value="ECO:0007669"/>
    <property type="project" value="UniProtKB-UniRule"/>
</dbReference>
<dbReference type="GO" id="GO:0000287">
    <property type="term" value="F:magnesium ion binding"/>
    <property type="evidence" value="ECO:0007669"/>
    <property type="project" value="InterPro"/>
</dbReference>
<dbReference type="GO" id="GO:0042254">
    <property type="term" value="P:ribosome biogenesis"/>
    <property type="evidence" value="ECO:0007669"/>
    <property type="project" value="UniProtKB-UniRule"/>
</dbReference>
<dbReference type="CDD" id="cd01898">
    <property type="entry name" value="Obg"/>
    <property type="match status" value="1"/>
</dbReference>
<dbReference type="FunFam" id="2.70.210.12:FF:000001">
    <property type="entry name" value="GTPase Obg"/>
    <property type="match status" value="1"/>
</dbReference>
<dbReference type="Gene3D" id="3.30.300.350">
    <property type="entry name" value="GTP-binding protein OBG, C-terminal domain"/>
    <property type="match status" value="1"/>
</dbReference>
<dbReference type="Gene3D" id="2.70.210.12">
    <property type="entry name" value="GTP1/OBG domain"/>
    <property type="match status" value="1"/>
</dbReference>
<dbReference type="Gene3D" id="3.40.50.300">
    <property type="entry name" value="P-loop containing nucleotide triphosphate hydrolases"/>
    <property type="match status" value="1"/>
</dbReference>
<dbReference type="HAMAP" id="MF_01454">
    <property type="entry name" value="GTPase_Obg"/>
    <property type="match status" value="1"/>
</dbReference>
<dbReference type="InterPro" id="IPR031167">
    <property type="entry name" value="G_OBG"/>
</dbReference>
<dbReference type="InterPro" id="IPR006073">
    <property type="entry name" value="GTP-bd"/>
</dbReference>
<dbReference type="InterPro" id="IPR014100">
    <property type="entry name" value="GTP-bd_Obg/CgtA"/>
</dbReference>
<dbReference type="InterPro" id="IPR036346">
    <property type="entry name" value="GTP-bd_prot_GTP1/OBG_C_sf"/>
</dbReference>
<dbReference type="InterPro" id="IPR006074">
    <property type="entry name" value="GTP1-OBG_CS"/>
</dbReference>
<dbReference type="InterPro" id="IPR006169">
    <property type="entry name" value="GTP1_OBG_dom"/>
</dbReference>
<dbReference type="InterPro" id="IPR036726">
    <property type="entry name" value="GTP1_OBG_dom_sf"/>
</dbReference>
<dbReference type="InterPro" id="IPR045086">
    <property type="entry name" value="OBG_GTPase"/>
</dbReference>
<dbReference type="InterPro" id="IPR015349">
    <property type="entry name" value="OCT_dom"/>
</dbReference>
<dbReference type="InterPro" id="IPR027417">
    <property type="entry name" value="P-loop_NTPase"/>
</dbReference>
<dbReference type="InterPro" id="IPR005225">
    <property type="entry name" value="Small_GTP-bd"/>
</dbReference>
<dbReference type="NCBIfam" id="TIGR02729">
    <property type="entry name" value="Obg_CgtA"/>
    <property type="match status" value="1"/>
</dbReference>
<dbReference type="NCBIfam" id="TIGR03595">
    <property type="entry name" value="Obg_CgtA_exten"/>
    <property type="match status" value="1"/>
</dbReference>
<dbReference type="NCBIfam" id="NF008954">
    <property type="entry name" value="PRK12296.1"/>
    <property type="match status" value="1"/>
</dbReference>
<dbReference type="NCBIfam" id="NF008955">
    <property type="entry name" value="PRK12297.1"/>
    <property type="match status" value="1"/>
</dbReference>
<dbReference type="NCBIfam" id="NF008956">
    <property type="entry name" value="PRK12299.1"/>
    <property type="match status" value="1"/>
</dbReference>
<dbReference type="NCBIfam" id="TIGR00231">
    <property type="entry name" value="small_GTP"/>
    <property type="match status" value="1"/>
</dbReference>
<dbReference type="PANTHER" id="PTHR11702">
    <property type="entry name" value="DEVELOPMENTALLY REGULATED GTP-BINDING PROTEIN-RELATED"/>
    <property type="match status" value="1"/>
</dbReference>
<dbReference type="PANTHER" id="PTHR11702:SF31">
    <property type="entry name" value="MITOCHONDRIAL RIBOSOME-ASSOCIATED GTPASE 2"/>
    <property type="match status" value="1"/>
</dbReference>
<dbReference type="Pfam" id="PF09269">
    <property type="entry name" value="DUF1967"/>
    <property type="match status" value="1"/>
</dbReference>
<dbReference type="Pfam" id="PF01018">
    <property type="entry name" value="GTP1_OBG"/>
    <property type="match status" value="1"/>
</dbReference>
<dbReference type="Pfam" id="PF01926">
    <property type="entry name" value="MMR_HSR1"/>
    <property type="match status" value="1"/>
</dbReference>
<dbReference type="PIRSF" id="PIRSF002401">
    <property type="entry name" value="GTP_bd_Obg/CgtA"/>
    <property type="match status" value="1"/>
</dbReference>
<dbReference type="PRINTS" id="PR00326">
    <property type="entry name" value="GTP1OBG"/>
</dbReference>
<dbReference type="SUPFAM" id="SSF102741">
    <property type="entry name" value="Obg GTP-binding protein C-terminal domain"/>
    <property type="match status" value="1"/>
</dbReference>
<dbReference type="SUPFAM" id="SSF82051">
    <property type="entry name" value="Obg GTP-binding protein N-terminal domain"/>
    <property type="match status" value="1"/>
</dbReference>
<dbReference type="SUPFAM" id="SSF52540">
    <property type="entry name" value="P-loop containing nucleoside triphosphate hydrolases"/>
    <property type="match status" value="1"/>
</dbReference>
<dbReference type="PROSITE" id="PS51710">
    <property type="entry name" value="G_OBG"/>
    <property type="match status" value="1"/>
</dbReference>
<dbReference type="PROSITE" id="PS00905">
    <property type="entry name" value="GTP1_OBG"/>
    <property type="match status" value="1"/>
</dbReference>
<dbReference type="PROSITE" id="PS51883">
    <property type="entry name" value="OBG"/>
    <property type="match status" value="1"/>
</dbReference>
<dbReference type="PROSITE" id="PS51881">
    <property type="entry name" value="OCT"/>
    <property type="match status" value="1"/>
</dbReference>
<protein>
    <recommendedName>
        <fullName evidence="1">GTPase Obg</fullName>
        <ecNumber evidence="1">3.6.5.-</ecNumber>
    </recommendedName>
    <alternativeName>
        <fullName evidence="1">GTP-binding protein Obg</fullName>
    </alternativeName>
</protein>
<keyword id="KW-0963">Cytoplasm</keyword>
<keyword id="KW-0342">GTP-binding</keyword>
<keyword id="KW-0378">Hydrolase</keyword>
<keyword id="KW-0460">Magnesium</keyword>
<keyword id="KW-0479">Metal-binding</keyword>
<keyword id="KW-0547">Nucleotide-binding</keyword>
<keyword id="KW-1185">Reference proteome</keyword>
<organism>
    <name type="scientific">Natranaerobius thermophilus (strain ATCC BAA-1301 / DSM 18059 / JW/NM-WN-LF)</name>
    <dbReference type="NCBI Taxonomy" id="457570"/>
    <lineage>
        <taxon>Bacteria</taxon>
        <taxon>Bacillati</taxon>
        <taxon>Bacillota</taxon>
        <taxon>Clostridia</taxon>
        <taxon>Natranaerobiales</taxon>
        <taxon>Natranaerobiaceae</taxon>
        <taxon>Natranaerobius</taxon>
    </lineage>
</organism>
<name>OBG_NATTJ</name>
<comment type="function">
    <text evidence="1">An essential GTPase which binds GTP, GDP and possibly (p)ppGpp with moderate affinity, with high nucleotide exchange rates and a fairly low GTP hydrolysis rate. Plays a role in control of the cell cycle, stress response, ribosome biogenesis and in those bacteria that undergo differentiation, in morphogenesis control.</text>
</comment>
<comment type="cofactor">
    <cofactor evidence="1">
        <name>Mg(2+)</name>
        <dbReference type="ChEBI" id="CHEBI:18420"/>
    </cofactor>
</comment>
<comment type="subunit">
    <text evidence="1">Monomer.</text>
</comment>
<comment type="subcellular location">
    <subcellularLocation>
        <location evidence="1">Cytoplasm</location>
    </subcellularLocation>
</comment>
<comment type="similarity">
    <text evidence="1">Belongs to the TRAFAC class OBG-HflX-like GTPase superfamily. OBG GTPase family.</text>
</comment>
<sequence>MFIDRAKIYVKGGDGGNGIVAFRREKYVPDGGPSGGDGGKGGNVILEVDPGLKSLMDYKYNIHIKGKRGEHGQGSNQHGKSGQDKVIKVPPGTVVKEATSGKVLADLVHEHDSYIAAEGGRGGRGNTRFANPKNKAPRFSEDGKPGEEKWIVLELKVMAEVGLIGYPNVGKSTLLSQVTKASPKIDSYHFTTLNPNLGVVELEEGSRFVMADIPGLIEGAHQGRGLGDQFLRHIERTKMLIHVIDIASIEGRDPVLDIETINEELKGYNSRVMDKPQVIAANKMDLGDQAEENLQRLLDKVNSDEILIPEQYKKIFPISAATGEGLRELLDFVAEKVAQLPDTHDTFDIDLELPESEENTDTEQEALFTMSQDDKIEEKPKSDFGIRKEGDIFIVKHEKLEKILNEIDVHTEKGRHYFQAKVDEFGLEEALVDKGIKPGDTVKIGNVEFEYQ</sequence>
<evidence type="ECO:0000255" key="1">
    <source>
        <dbReference type="HAMAP-Rule" id="MF_01454"/>
    </source>
</evidence>
<evidence type="ECO:0000255" key="2">
    <source>
        <dbReference type="PROSITE-ProRule" id="PRU01229"/>
    </source>
</evidence>
<evidence type="ECO:0000255" key="3">
    <source>
        <dbReference type="PROSITE-ProRule" id="PRU01231"/>
    </source>
</evidence>
<evidence type="ECO:0000256" key="4">
    <source>
        <dbReference type="SAM" id="MobiDB-lite"/>
    </source>
</evidence>
<feature type="chain" id="PRO_0000386079" description="GTPase Obg">
    <location>
        <begin position="1"/>
        <end position="452"/>
    </location>
</feature>
<feature type="domain" description="Obg" evidence="3">
    <location>
        <begin position="1"/>
        <end position="158"/>
    </location>
</feature>
<feature type="domain" description="OBG-type G" evidence="1">
    <location>
        <begin position="159"/>
        <end position="338"/>
    </location>
</feature>
<feature type="domain" description="OCT" evidence="2">
    <location>
        <begin position="376"/>
        <end position="452"/>
    </location>
</feature>
<feature type="region of interest" description="Disordered" evidence="4">
    <location>
        <begin position="66"/>
        <end position="87"/>
    </location>
</feature>
<feature type="region of interest" description="Disordered" evidence="4">
    <location>
        <begin position="117"/>
        <end position="143"/>
    </location>
</feature>
<feature type="binding site" evidence="1">
    <location>
        <begin position="165"/>
        <end position="172"/>
    </location>
    <ligand>
        <name>GTP</name>
        <dbReference type="ChEBI" id="CHEBI:37565"/>
    </ligand>
</feature>
<feature type="binding site" evidence="1">
    <location>
        <position position="172"/>
    </location>
    <ligand>
        <name>Mg(2+)</name>
        <dbReference type="ChEBI" id="CHEBI:18420"/>
    </ligand>
</feature>
<feature type="binding site" evidence="1">
    <location>
        <begin position="190"/>
        <end position="194"/>
    </location>
    <ligand>
        <name>GTP</name>
        <dbReference type="ChEBI" id="CHEBI:37565"/>
    </ligand>
</feature>
<feature type="binding site" evidence="1">
    <location>
        <position position="192"/>
    </location>
    <ligand>
        <name>Mg(2+)</name>
        <dbReference type="ChEBI" id="CHEBI:18420"/>
    </ligand>
</feature>
<feature type="binding site" evidence="1">
    <location>
        <begin position="212"/>
        <end position="215"/>
    </location>
    <ligand>
        <name>GTP</name>
        <dbReference type="ChEBI" id="CHEBI:37565"/>
    </ligand>
</feature>
<feature type="binding site" evidence="1">
    <location>
        <begin position="282"/>
        <end position="285"/>
    </location>
    <ligand>
        <name>GTP</name>
        <dbReference type="ChEBI" id="CHEBI:37565"/>
    </ligand>
</feature>
<feature type="binding site" evidence="1">
    <location>
        <begin position="319"/>
        <end position="321"/>
    </location>
    <ligand>
        <name>GTP</name>
        <dbReference type="ChEBI" id="CHEBI:37565"/>
    </ligand>
</feature>
<reference key="1">
    <citation type="submission" date="2008-04" db="EMBL/GenBank/DDBJ databases">
        <title>Complete sequence of chromosome of Natranaerobius thermophilus JW/NM-WN-LF.</title>
        <authorList>
            <consortium name="US DOE Joint Genome Institute"/>
            <person name="Copeland A."/>
            <person name="Lucas S."/>
            <person name="Lapidus A."/>
            <person name="Glavina del Rio T."/>
            <person name="Dalin E."/>
            <person name="Tice H."/>
            <person name="Bruce D."/>
            <person name="Goodwin L."/>
            <person name="Pitluck S."/>
            <person name="Chertkov O."/>
            <person name="Brettin T."/>
            <person name="Detter J.C."/>
            <person name="Han C."/>
            <person name="Kuske C.R."/>
            <person name="Schmutz J."/>
            <person name="Larimer F."/>
            <person name="Land M."/>
            <person name="Hauser L."/>
            <person name="Kyrpides N."/>
            <person name="Lykidis A."/>
            <person name="Mesbah N.M."/>
            <person name="Wiegel J."/>
        </authorList>
    </citation>
    <scope>NUCLEOTIDE SEQUENCE [LARGE SCALE GENOMIC DNA]</scope>
    <source>
        <strain>ATCC BAA-1301 / DSM 18059 / JW/NM-WN-LF</strain>
    </source>
</reference>
<proteinExistence type="inferred from homology"/>